<organism>
    <name type="scientific">Methanocaldococcus jannaschii (strain ATCC 43067 / DSM 2661 / JAL-1 / JCM 10045 / NBRC 100440)</name>
    <name type="common">Methanococcus jannaschii</name>
    <dbReference type="NCBI Taxonomy" id="243232"/>
    <lineage>
        <taxon>Archaea</taxon>
        <taxon>Methanobacteriati</taxon>
        <taxon>Methanobacteriota</taxon>
        <taxon>Methanomada group</taxon>
        <taxon>Methanococci</taxon>
        <taxon>Methanococcales</taxon>
        <taxon>Methanocaldococcaceae</taxon>
        <taxon>Methanocaldococcus</taxon>
    </lineage>
</organism>
<keyword id="KW-0002">3D-structure</keyword>
<keyword id="KW-0456">Lyase</keyword>
<keyword id="KW-1185">Reference proteome</keyword>
<keyword id="KW-0704">Schiff base</keyword>
<evidence type="ECO:0000255" key="1">
    <source>
        <dbReference type="HAMAP-Rule" id="MF_00681"/>
    </source>
</evidence>
<evidence type="ECO:0000269" key="2">
    <source>
    </source>
</evidence>
<evidence type="ECO:0000269" key="3">
    <source>
    </source>
</evidence>
<evidence type="ECO:0000269" key="4">
    <source>
    </source>
</evidence>
<evidence type="ECO:0000303" key="5">
    <source>
    </source>
</evidence>
<evidence type="ECO:0000303" key="6">
    <source>
    </source>
</evidence>
<evidence type="ECO:0000305" key="7"/>
<evidence type="ECO:0000305" key="8">
    <source>
    </source>
</evidence>
<evidence type="ECO:0007829" key="9">
    <source>
        <dbReference type="PDB" id="4RC1"/>
    </source>
</evidence>
<evidence type="ECO:0007829" key="10">
    <source>
        <dbReference type="PDB" id="4U9P"/>
    </source>
</evidence>
<accession>Q58499</accession>
<dbReference type="EC" id="4.2.3.153" evidence="1 4"/>
<dbReference type="EMBL" id="L77117">
    <property type="protein sequence ID" value="AAB99102.1"/>
    <property type="molecule type" value="Genomic_DNA"/>
</dbReference>
<dbReference type="PIR" id="B64437">
    <property type="entry name" value="B64437"/>
</dbReference>
<dbReference type="RefSeq" id="WP_010870611.1">
    <property type="nucleotide sequence ID" value="NC_000909.1"/>
</dbReference>
<dbReference type="PDB" id="4RC1">
    <property type="method" value="X-ray"/>
    <property type="resolution" value="2.40 A"/>
    <property type="chains" value="A/B/C/D/E/F/G/H/I=1-235"/>
</dbReference>
<dbReference type="PDB" id="4U9P">
    <property type="method" value="X-ray"/>
    <property type="resolution" value="1.70 A"/>
    <property type="chains" value="A/B/C=1-235"/>
</dbReference>
<dbReference type="PDBsum" id="4RC1"/>
<dbReference type="PDBsum" id="4U9P"/>
<dbReference type="SMR" id="Q58499"/>
<dbReference type="FunCoup" id="Q58499">
    <property type="interactions" value="110"/>
</dbReference>
<dbReference type="STRING" id="243232.MJ_1099"/>
<dbReference type="PaxDb" id="243232-MJ_1099"/>
<dbReference type="DNASU" id="1451996"/>
<dbReference type="EnsemblBacteria" id="AAB99102">
    <property type="protein sequence ID" value="AAB99102"/>
    <property type="gene ID" value="MJ_1099"/>
</dbReference>
<dbReference type="GeneID" id="1451996"/>
<dbReference type="KEGG" id="mja:MJ_1099"/>
<dbReference type="eggNOG" id="arCOG04482">
    <property type="taxonomic scope" value="Archaea"/>
</dbReference>
<dbReference type="HOGENOM" id="CLU_068659_0_0_2"/>
<dbReference type="InParanoid" id="Q58499"/>
<dbReference type="OrthoDB" id="81473at2157"/>
<dbReference type="PhylomeDB" id="Q58499"/>
<dbReference type="BioCyc" id="MetaCyc:MONOMER-18937"/>
<dbReference type="BRENDA" id="4.2.3.153">
    <property type="organism ID" value="3260"/>
</dbReference>
<dbReference type="UniPathway" id="UPA00080"/>
<dbReference type="EvolutionaryTrace" id="Q58499"/>
<dbReference type="Proteomes" id="UP000000805">
    <property type="component" value="Chromosome"/>
</dbReference>
<dbReference type="GO" id="GO:0016830">
    <property type="term" value="F:carbon-carbon lyase activity"/>
    <property type="evidence" value="ECO:0007669"/>
    <property type="project" value="UniProtKB-UniRule"/>
</dbReference>
<dbReference type="GO" id="GO:2001120">
    <property type="term" value="P:methanofuran biosynthetic process"/>
    <property type="evidence" value="ECO:0007669"/>
    <property type="project" value="UniProtKB-UniRule"/>
</dbReference>
<dbReference type="CDD" id="cd00945">
    <property type="entry name" value="Aldolase_Class_I"/>
    <property type="match status" value="1"/>
</dbReference>
<dbReference type="HAMAP" id="MF_00681">
    <property type="entry name" value="MfnB"/>
    <property type="match status" value="1"/>
</dbReference>
<dbReference type="InterPro" id="IPR007565">
    <property type="entry name" value="4HFCP_synth"/>
</dbReference>
<dbReference type="InterPro" id="IPR035081">
    <property type="entry name" value="4HFCP_synth_arc"/>
</dbReference>
<dbReference type="InterPro" id="IPR011060">
    <property type="entry name" value="RibuloseP-bd_barrel"/>
</dbReference>
<dbReference type="NCBIfam" id="NF002573">
    <property type="entry name" value="PRK02227.1-1"/>
    <property type="match status" value="1"/>
</dbReference>
<dbReference type="NCBIfam" id="NF002575">
    <property type="entry name" value="PRK02227.1-3"/>
    <property type="match status" value="1"/>
</dbReference>
<dbReference type="Pfam" id="PF04476">
    <property type="entry name" value="4HFCP_synth"/>
    <property type="match status" value="1"/>
</dbReference>
<dbReference type="PIRSF" id="PIRSF015957">
    <property type="entry name" value="UCP015957"/>
    <property type="match status" value="1"/>
</dbReference>
<dbReference type="SUPFAM" id="SSF51569">
    <property type="entry name" value="Aldolase"/>
    <property type="match status" value="1"/>
</dbReference>
<dbReference type="SUPFAM" id="SSF51366">
    <property type="entry name" value="Ribulose-phoshate binding barrel"/>
    <property type="match status" value="1"/>
</dbReference>
<name>MFNB_METJA</name>
<comment type="function">
    <text evidence="1 2 4">Catalyzes the formation of 4-(hydroxymethyl)-2-furancarboxaldehyde phosphate (4-HFC-P) from two molecules of glyceraldehyde-3-P (GA-3-P).</text>
</comment>
<comment type="catalytic activity">
    <reaction evidence="1 4">
        <text>2 D-glyceraldehyde 3-phosphate = 4-(hydroxymethyl)-2-furancarboxaldehyde phosphate + phosphate + 2 H2O</text>
        <dbReference type="Rhea" id="RHEA:43536"/>
        <dbReference type="ChEBI" id="CHEBI:15377"/>
        <dbReference type="ChEBI" id="CHEBI:43474"/>
        <dbReference type="ChEBI" id="CHEBI:59776"/>
        <dbReference type="ChEBI" id="CHEBI:83407"/>
        <dbReference type="EC" id="4.2.3.153"/>
    </reaction>
</comment>
<comment type="biophysicochemical properties">
    <kinetics>
        <text evidence="4">kcat is 0.026 sec(-1).</text>
    </kinetics>
    <phDependence>
        <text evidence="4">Optimum pH is 7.0.</text>
    </phDependence>
</comment>
<comment type="pathway">
    <text evidence="1 2 4">Cofactor biosynthesis; methanofuran biosynthesis.</text>
</comment>
<comment type="subunit">
    <text evidence="3">Homohexamer. Trimer of dimers.</text>
</comment>
<comment type="similarity">
    <text evidence="1">Belongs to the MfnB family.</text>
</comment>
<protein>
    <recommendedName>
        <fullName evidence="1 7">(5-formylfuran-3-yl)methyl phosphate synthase</fullName>
        <ecNumber evidence="1 4">4.2.3.153</ecNumber>
    </recommendedName>
    <alternativeName>
        <fullName evidence="1 6">4-(hydroxymethyl)-2-furancarboxaldehyde-phosphate synthase</fullName>
        <shortName evidence="1 5">4-HFC-P synthase</shortName>
    </alternativeName>
</protein>
<feature type="chain" id="PRO_0000134865" description="(5-formylfuran-3-yl)methyl phosphate synthase">
    <location>
        <begin position="1"/>
        <end position="235"/>
    </location>
</feature>
<feature type="active site" description="Schiff-base intermediate with substrate" evidence="1 8">
    <location>
        <position position="27"/>
    </location>
</feature>
<feature type="active site" description="Proton acceptor" evidence="1 8">
    <location>
        <position position="85"/>
    </location>
</feature>
<feature type="mutagenesis site" description="Lack of activity." evidence="4">
    <original>D</original>
    <variation>N</variation>
    <location>
        <position position="25"/>
    </location>
</feature>
<feature type="mutagenesis site" description="Lack of activity." evidence="4">
    <original>K</original>
    <variation>R</variation>
    <location>
        <position position="27"/>
    </location>
</feature>
<feature type="mutagenesis site" description="Lack of activity." evidence="4">
    <original>K</original>
    <variation>R</variation>
    <location>
        <position position="85"/>
    </location>
</feature>
<feature type="mutagenesis site" description="Lack of activity." evidence="4">
    <original>D</original>
    <variation>N</variation>
    <location>
        <position position="151"/>
    </location>
</feature>
<feature type="mutagenesis site" description="Almost no change in activity." evidence="4">
    <original>K</original>
    <variation>R</variation>
    <location>
        <position position="155"/>
    </location>
</feature>
<feature type="strand" evidence="10">
    <location>
        <begin position="2"/>
        <end position="5"/>
    </location>
</feature>
<feature type="helix" evidence="10">
    <location>
        <begin position="10"/>
        <end position="19"/>
    </location>
</feature>
<feature type="strand" evidence="10">
    <location>
        <begin position="22"/>
        <end position="26"/>
    </location>
</feature>
<feature type="helix" evidence="10">
    <location>
        <begin position="29"/>
        <end position="31"/>
    </location>
</feature>
<feature type="helix" evidence="10">
    <location>
        <begin position="39"/>
        <end position="48"/>
    </location>
</feature>
<feature type="strand" evidence="10">
    <location>
        <begin position="53"/>
        <end position="62"/>
    </location>
</feature>
<feature type="helix" evidence="10">
    <location>
        <begin position="66"/>
        <end position="78"/>
    </location>
</feature>
<feature type="strand" evidence="10">
    <location>
        <begin position="82"/>
        <end position="88"/>
    </location>
</feature>
<feature type="helix" evidence="10">
    <location>
        <begin position="94"/>
        <end position="111"/>
    </location>
</feature>
<feature type="strand" evidence="10">
    <location>
        <begin position="115"/>
        <end position="122"/>
    </location>
</feature>
<feature type="helix" evidence="10">
    <location>
        <begin position="125"/>
        <end position="127"/>
    </location>
</feature>
<feature type="helix" evidence="10">
    <location>
        <begin position="133"/>
        <end position="135"/>
    </location>
</feature>
<feature type="helix" evidence="10">
    <location>
        <begin position="136"/>
        <end position="143"/>
    </location>
</feature>
<feature type="strand" evidence="10">
    <location>
        <begin position="146"/>
        <end position="151"/>
    </location>
</feature>
<feature type="helix" evidence="10">
    <location>
        <begin position="160"/>
        <end position="163"/>
    </location>
</feature>
<feature type="helix" evidence="10">
    <location>
        <begin position="166"/>
        <end position="178"/>
    </location>
</feature>
<feature type="strand" evidence="10">
    <location>
        <begin position="182"/>
        <end position="185"/>
    </location>
</feature>
<feature type="helix" evidence="10">
    <location>
        <begin position="191"/>
        <end position="193"/>
    </location>
</feature>
<feature type="helix" evidence="10">
    <location>
        <begin position="194"/>
        <end position="199"/>
    </location>
</feature>
<feature type="strand" evidence="10">
    <location>
        <begin position="203"/>
        <end position="208"/>
    </location>
</feature>
<feature type="helix" evidence="10">
    <location>
        <begin position="209"/>
        <end position="211"/>
    </location>
</feature>
<feature type="strand" evidence="9">
    <location>
        <begin position="212"/>
        <end position="214"/>
    </location>
</feature>
<feature type="turn" evidence="9">
    <location>
        <begin position="217"/>
        <end position="219"/>
    </location>
</feature>
<feature type="helix" evidence="10">
    <location>
        <begin position="224"/>
        <end position="233"/>
    </location>
</feature>
<gene>
    <name evidence="1 5" type="primary">mfnB</name>
    <name type="ordered locus">MJ1099</name>
</gene>
<proteinExistence type="evidence at protein level"/>
<reference key="1">
    <citation type="journal article" date="1996" name="Science">
        <title>Complete genome sequence of the methanogenic archaeon, Methanococcus jannaschii.</title>
        <authorList>
            <person name="Bult C.J."/>
            <person name="White O."/>
            <person name="Olsen G.J."/>
            <person name="Zhou L."/>
            <person name="Fleischmann R.D."/>
            <person name="Sutton G.G."/>
            <person name="Blake J.A."/>
            <person name="FitzGerald L.M."/>
            <person name="Clayton R.A."/>
            <person name="Gocayne J.D."/>
            <person name="Kerlavage A.R."/>
            <person name="Dougherty B.A."/>
            <person name="Tomb J.-F."/>
            <person name="Adams M.D."/>
            <person name="Reich C.I."/>
            <person name="Overbeek R."/>
            <person name="Kirkness E.F."/>
            <person name="Weinstock K.G."/>
            <person name="Merrick J.M."/>
            <person name="Glodek A."/>
            <person name="Scott J.L."/>
            <person name="Geoghagen N.S.M."/>
            <person name="Weidman J.F."/>
            <person name="Fuhrmann J.L."/>
            <person name="Nguyen D."/>
            <person name="Utterback T.R."/>
            <person name="Kelley J.M."/>
            <person name="Peterson J.D."/>
            <person name="Sadow P.W."/>
            <person name="Hanna M.C."/>
            <person name="Cotton M.D."/>
            <person name="Roberts K.M."/>
            <person name="Hurst M.A."/>
            <person name="Kaine B.P."/>
            <person name="Borodovsky M."/>
            <person name="Klenk H.-P."/>
            <person name="Fraser C.M."/>
            <person name="Smith H.O."/>
            <person name="Woese C.R."/>
            <person name="Venter J.C."/>
        </authorList>
    </citation>
    <scope>NUCLEOTIDE SEQUENCE [LARGE SCALE GENOMIC DNA]</scope>
    <source>
        <strain>ATCC 43067 / DSM 2661 / JAL-1 / JCM 10045 / NBRC 100440</strain>
    </source>
</reference>
<reference key="2">
    <citation type="journal article" date="2014" name="Biochemistry">
        <title>Biosynthesis of the 5-(aminomethyl)-3-furanmethanol moiety of methanofuran.</title>
        <authorList>
            <person name="Miller D."/>
            <person name="Wang Y."/>
            <person name="Xu H."/>
            <person name="Harich K."/>
            <person name="White R.H."/>
        </authorList>
    </citation>
    <scope>FUNCTION</scope>
    <scope>PATHWAY</scope>
</reference>
<reference key="3">
    <citation type="journal article" date="2015" name="Biochemistry">
        <title>Mechanism of the enzymatic synthesis of 4-(hydroxymethyl)-2-furancarboxaldehyde-phosphate (4-HFC-P) from glyceraldehyde-3-phosphate catalyzed by 4-HFC-P synthase.</title>
        <authorList>
            <person name="Wang Y."/>
            <person name="Jones M.K."/>
            <person name="Xu H."/>
            <person name="Ray W.K."/>
            <person name="White R.H."/>
        </authorList>
    </citation>
    <scope>FUNCTION</scope>
    <scope>CATALYTIC ACTIVITY</scope>
    <scope>BIOPHYSICOCHEMICAL PROPERTIES</scope>
    <scope>REACTION MECHANISM</scope>
    <scope>PATHWAY</scope>
    <scope>ACTIVE SITE</scope>
    <scope>MUTAGENESIS OF ASP-25; LYS-27; LYS-85; ASP-151 AND LYS-155</scope>
</reference>
<reference key="4">
    <citation type="journal article" date="2014" name="Acta Crystallogr. F">
        <title>Structure of the methanofuran/methanopterin-biosynthetic enzyme MJ1099 from Methanocaldococcus jannaschii.</title>
        <authorList>
            <person name="Bobik T.A."/>
            <person name="Morales E.J."/>
            <person name="Shin A."/>
            <person name="Cascio D."/>
            <person name="Sawaya M.R."/>
            <person name="Arbing M."/>
            <person name="Yeates T.O."/>
            <person name="Rasche M.E."/>
        </authorList>
    </citation>
    <scope>X-RAY CRYSTALLOGRAPHY (1.70 ANGSTROMS)</scope>
    <scope>SUBUNIT</scope>
</reference>
<sequence length="235" mass="25099">MILLVSPIDVEEAKEAIAGGADIIDVKNPKEGSLGANFPWMIKAIREVTPKDLLVSATVGDVPYKPGTISLAAVGAAISGADYIKVGLYGVKNYYQAVELMKNVVRAVKDIDENKIVVAAGYADAYRVGAVEPLIVPKIARDAGCDVAMLDTAIKDGKTLFDFQSKEILAEFVDEAHSYGLKCALAGSIKKEHIPILKEIGTDIVGVRGAACKGGDRNNGRIDRELVKELKELCK</sequence>